<sequence length="383" mass="40415">MTIPIKESDPITVDVALGERSYDIVIGRGVLPSLGERIAALRPGARVAVVTDARVATHWLQRTEASLTGAGLTTSRIVVDEGEVSKSYAGVEFVCEELIKARIERNDLVVALGGGVVGDLAGFAAAIVRRGVDFVQVPTSLLAQVDSSVGGKTGINSPQGKNLVGAFHQPILVVADTAVLDTLSPRQFRAGYAEVAKYGLIGDEAFFAWLEVHHADIVKGDAAREHAVATSCRAKAAIVARDERESGERALLNLGHTFGHALEAATGFCGRLYHGEGVSIGMVLAAELSAQLGMIAAADVSRIERHLAAAGLPTRLQDIAGFRQEGLADADALMTLMAQDKKVRRGRLTFILLKAIGQAVVSSDVEPSMVRDFLARKLADAPA</sequence>
<reference key="1">
    <citation type="journal article" date="2006" name="Appl. Environ. Microbiol.">
        <title>Genome sequence of the chemolithoautotrophic nitrite-oxidizing bacterium Nitrobacter winogradskyi Nb-255.</title>
        <authorList>
            <person name="Starkenburg S.R."/>
            <person name="Chain P.S.G."/>
            <person name="Sayavedra-Soto L.A."/>
            <person name="Hauser L."/>
            <person name="Land M.L."/>
            <person name="Larimer F.W."/>
            <person name="Malfatti S.A."/>
            <person name="Klotz M.G."/>
            <person name="Bottomley P.J."/>
            <person name="Arp D.J."/>
            <person name="Hickey W.J."/>
        </authorList>
    </citation>
    <scope>NUCLEOTIDE SEQUENCE [LARGE SCALE GENOMIC DNA]</scope>
    <source>
        <strain>ATCC 25391 / DSM 10237 / CIP 104748 / NCIMB 11846 / Nb-255</strain>
    </source>
</reference>
<accession>Q3SVM8</accession>
<comment type="function">
    <text evidence="1">Catalyzes the conversion of 3-deoxy-D-arabino-heptulosonate 7-phosphate (DAHP) to dehydroquinate (DHQ).</text>
</comment>
<comment type="catalytic activity">
    <reaction evidence="1">
        <text>7-phospho-2-dehydro-3-deoxy-D-arabino-heptonate = 3-dehydroquinate + phosphate</text>
        <dbReference type="Rhea" id="RHEA:21968"/>
        <dbReference type="ChEBI" id="CHEBI:32364"/>
        <dbReference type="ChEBI" id="CHEBI:43474"/>
        <dbReference type="ChEBI" id="CHEBI:58394"/>
        <dbReference type="EC" id="4.2.3.4"/>
    </reaction>
</comment>
<comment type="cofactor">
    <cofactor evidence="1">
        <name>Co(2+)</name>
        <dbReference type="ChEBI" id="CHEBI:48828"/>
    </cofactor>
    <cofactor evidence="1">
        <name>Zn(2+)</name>
        <dbReference type="ChEBI" id="CHEBI:29105"/>
    </cofactor>
    <text evidence="1">Binds 1 divalent metal cation per subunit. Can use either Co(2+) or Zn(2+).</text>
</comment>
<comment type="cofactor">
    <cofactor evidence="1">
        <name>NAD(+)</name>
        <dbReference type="ChEBI" id="CHEBI:57540"/>
    </cofactor>
</comment>
<comment type="pathway">
    <text evidence="1">Metabolic intermediate biosynthesis; chorismate biosynthesis; chorismate from D-erythrose 4-phosphate and phosphoenolpyruvate: step 2/7.</text>
</comment>
<comment type="subcellular location">
    <subcellularLocation>
        <location evidence="1">Cytoplasm</location>
    </subcellularLocation>
</comment>
<comment type="similarity">
    <text evidence="1">Belongs to the sugar phosphate cyclases superfamily. Dehydroquinate synthase family.</text>
</comment>
<feature type="chain" id="PRO_0000231101" description="3-dehydroquinate synthase">
    <location>
        <begin position="1"/>
        <end position="383"/>
    </location>
</feature>
<feature type="binding site" evidence="1">
    <location>
        <begin position="81"/>
        <end position="86"/>
    </location>
    <ligand>
        <name>NAD(+)</name>
        <dbReference type="ChEBI" id="CHEBI:57540"/>
    </ligand>
</feature>
<feature type="binding site" evidence="1">
    <location>
        <begin position="115"/>
        <end position="119"/>
    </location>
    <ligand>
        <name>NAD(+)</name>
        <dbReference type="ChEBI" id="CHEBI:57540"/>
    </ligand>
</feature>
<feature type="binding site" evidence="1">
    <location>
        <begin position="139"/>
        <end position="140"/>
    </location>
    <ligand>
        <name>NAD(+)</name>
        <dbReference type="ChEBI" id="CHEBI:57540"/>
    </ligand>
</feature>
<feature type="binding site" evidence="1">
    <location>
        <position position="152"/>
    </location>
    <ligand>
        <name>NAD(+)</name>
        <dbReference type="ChEBI" id="CHEBI:57540"/>
    </ligand>
</feature>
<feature type="binding site" evidence="1">
    <location>
        <position position="161"/>
    </location>
    <ligand>
        <name>NAD(+)</name>
        <dbReference type="ChEBI" id="CHEBI:57540"/>
    </ligand>
</feature>
<feature type="binding site" evidence="1">
    <location>
        <position position="194"/>
    </location>
    <ligand>
        <name>Zn(2+)</name>
        <dbReference type="ChEBI" id="CHEBI:29105"/>
    </ligand>
</feature>
<feature type="binding site" evidence="1">
    <location>
        <position position="256"/>
    </location>
    <ligand>
        <name>Zn(2+)</name>
        <dbReference type="ChEBI" id="CHEBI:29105"/>
    </ligand>
</feature>
<feature type="binding site" evidence="1">
    <location>
        <position position="274"/>
    </location>
    <ligand>
        <name>Zn(2+)</name>
        <dbReference type="ChEBI" id="CHEBI:29105"/>
    </ligand>
</feature>
<evidence type="ECO:0000255" key="1">
    <source>
        <dbReference type="HAMAP-Rule" id="MF_00110"/>
    </source>
</evidence>
<name>AROB_NITWN</name>
<keyword id="KW-0028">Amino-acid biosynthesis</keyword>
<keyword id="KW-0057">Aromatic amino acid biosynthesis</keyword>
<keyword id="KW-0170">Cobalt</keyword>
<keyword id="KW-0963">Cytoplasm</keyword>
<keyword id="KW-0456">Lyase</keyword>
<keyword id="KW-0479">Metal-binding</keyword>
<keyword id="KW-0520">NAD</keyword>
<keyword id="KW-0547">Nucleotide-binding</keyword>
<keyword id="KW-1185">Reference proteome</keyword>
<keyword id="KW-0862">Zinc</keyword>
<protein>
    <recommendedName>
        <fullName evidence="1">3-dehydroquinate synthase</fullName>
        <shortName evidence="1">DHQS</shortName>
        <ecNumber evidence="1">4.2.3.4</ecNumber>
    </recommendedName>
</protein>
<proteinExistence type="inferred from homology"/>
<dbReference type="EC" id="4.2.3.4" evidence="1"/>
<dbReference type="EMBL" id="CP000115">
    <property type="protein sequence ID" value="ABA03663.1"/>
    <property type="molecule type" value="Genomic_DNA"/>
</dbReference>
<dbReference type="RefSeq" id="WP_011313727.1">
    <property type="nucleotide sequence ID" value="NC_007406.1"/>
</dbReference>
<dbReference type="SMR" id="Q3SVM8"/>
<dbReference type="STRING" id="323098.Nwi_0396"/>
<dbReference type="KEGG" id="nwi:Nwi_0396"/>
<dbReference type="eggNOG" id="COG0337">
    <property type="taxonomic scope" value="Bacteria"/>
</dbReference>
<dbReference type="HOGENOM" id="CLU_001201_0_2_5"/>
<dbReference type="OrthoDB" id="9806583at2"/>
<dbReference type="UniPathway" id="UPA00053">
    <property type="reaction ID" value="UER00085"/>
</dbReference>
<dbReference type="Proteomes" id="UP000002531">
    <property type="component" value="Chromosome"/>
</dbReference>
<dbReference type="GO" id="GO:0005737">
    <property type="term" value="C:cytoplasm"/>
    <property type="evidence" value="ECO:0007669"/>
    <property type="project" value="UniProtKB-SubCell"/>
</dbReference>
<dbReference type="GO" id="GO:0003856">
    <property type="term" value="F:3-dehydroquinate synthase activity"/>
    <property type="evidence" value="ECO:0007669"/>
    <property type="project" value="UniProtKB-UniRule"/>
</dbReference>
<dbReference type="GO" id="GO:0046872">
    <property type="term" value="F:metal ion binding"/>
    <property type="evidence" value="ECO:0007669"/>
    <property type="project" value="UniProtKB-KW"/>
</dbReference>
<dbReference type="GO" id="GO:0000166">
    <property type="term" value="F:nucleotide binding"/>
    <property type="evidence" value="ECO:0007669"/>
    <property type="project" value="UniProtKB-KW"/>
</dbReference>
<dbReference type="GO" id="GO:0008652">
    <property type="term" value="P:amino acid biosynthetic process"/>
    <property type="evidence" value="ECO:0007669"/>
    <property type="project" value="UniProtKB-KW"/>
</dbReference>
<dbReference type="GO" id="GO:0009073">
    <property type="term" value="P:aromatic amino acid family biosynthetic process"/>
    <property type="evidence" value="ECO:0007669"/>
    <property type="project" value="UniProtKB-KW"/>
</dbReference>
<dbReference type="GO" id="GO:0009423">
    <property type="term" value="P:chorismate biosynthetic process"/>
    <property type="evidence" value="ECO:0007669"/>
    <property type="project" value="UniProtKB-UniRule"/>
</dbReference>
<dbReference type="CDD" id="cd08195">
    <property type="entry name" value="DHQS"/>
    <property type="match status" value="1"/>
</dbReference>
<dbReference type="FunFam" id="3.40.50.1970:FF:000001">
    <property type="entry name" value="3-dehydroquinate synthase"/>
    <property type="match status" value="1"/>
</dbReference>
<dbReference type="Gene3D" id="3.40.50.1970">
    <property type="match status" value="1"/>
</dbReference>
<dbReference type="Gene3D" id="1.20.1090.10">
    <property type="entry name" value="Dehydroquinate synthase-like - alpha domain"/>
    <property type="match status" value="1"/>
</dbReference>
<dbReference type="HAMAP" id="MF_00110">
    <property type="entry name" value="DHQ_synthase"/>
    <property type="match status" value="1"/>
</dbReference>
<dbReference type="InterPro" id="IPR050071">
    <property type="entry name" value="Dehydroquinate_synthase"/>
</dbReference>
<dbReference type="InterPro" id="IPR016037">
    <property type="entry name" value="DHQ_synth_AroB"/>
</dbReference>
<dbReference type="InterPro" id="IPR030963">
    <property type="entry name" value="DHQ_synth_fam"/>
</dbReference>
<dbReference type="InterPro" id="IPR030960">
    <property type="entry name" value="DHQS/DOIS_N"/>
</dbReference>
<dbReference type="InterPro" id="IPR056179">
    <property type="entry name" value="DHQS_C"/>
</dbReference>
<dbReference type="NCBIfam" id="TIGR01357">
    <property type="entry name" value="aroB"/>
    <property type="match status" value="1"/>
</dbReference>
<dbReference type="PANTHER" id="PTHR43622">
    <property type="entry name" value="3-DEHYDROQUINATE SYNTHASE"/>
    <property type="match status" value="1"/>
</dbReference>
<dbReference type="PANTHER" id="PTHR43622:SF7">
    <property type="entry name" value="3-DEHYDROQUINATE SYNTHASE, CHLOROPLASTIC"/>
    <property type="match status" value="1"/>
</dbReference>
<dbReference type="Pfam" id="PF01761">
    <property type="entry name" value="DHQ_synthase"/>
    <property type="match status" value="1"/>
</dbReference>
<dbReference type="Pfam" id="PF24621">
    <property type="entry name" value="DHQS_C"/>
    <property type="match status" value="1"/>
</dbReference>
<dbReference type="PIRSF" id="PIRSF001455">
    <property type="entry name" value="DHQ_synth"/>
    <property type="match status" value="1"/>
</dbReference>
<dbReference type="SUPFAM" id="SSF56796">
    <property type="entry name" value="Dehydroquinate synthase-like"/>
    <property type="match status" value="1"/>
</dbReference>
<organism>
    <name type="scientific">Nitrobacter winogradskyi (strain ATCC 25391 / DSM 10237 / CIP 104748 / NCIMB 11846 / Nb-255)</name>
    <dbReference type="NCBI Taxonomy" id="323098"/>
    <lineage>
        <taxon>Bacteria</taxon>
        <taxon>Pseudomonadati</taxon>
        <taxon>Pseudomonadota</taxon>
        <taxon>Alphaproteobacteria</taxon>
        <taxon>Hyphomicrobiales</taxon>
        <taxon>Nitrobacteraceae</taxon>
        <taxon>Nitrobacter</taxon>
    </lineage>
</organism>
<gene>
    <name evidence="1" type="primary">aroB</name>
    <name type="ordered locus">Nwi_0396</name>
</gene>